<dbReference type="EMBL" id="M55407">
    <property type="protein sequence ID" value="AAA03345.1"/>
    <property type="molecule type" value="Unassigned_DNA"/>
</dbReference>
<dbReference type="EMBL" id="M69016">
    <property type="protein sequence ID" value="AAA19877.1"/>
    <property type="molecule type" value="Unassigned_DNA"/>
</dbReference>
<dbReference type="EMBL" id="CM000364">
    <property type="protein sequence ID" value="EDX13558.1"/>
    <property type="molecule type" value="Genomic_DNA"/>
</dbReference>
<dbReference type="PIR" id="B61194">
    <property type="entry name" value="B61194"/>
</dbReference>
<dbReference type="STRING" id="7240.P61874"/>
<dbReference type="EnsemblMetazoa" id="FBtr0220667">
    <property type="protein sequence ID" value="FBpp0219159"/>
    <property type="gene ID" value="FBgn0012845"/>
</dbReference>
<dbReference type="EnsemblMetazoa" id="XM_002104019.3">
    <property type="protein sequence ID" value="XP_002104055.1"/>
    <property type="gene ID" value="LOC6728719"/>
</dbReference>
<dbReference type="GeneID" id="6728719"/>
<dbReference type="KEGG" id="dsi:Dsimw501_GD20757"/>
<dbReference type="HOGENOM" id="CLU_200785_3_0_1"/>
<dbReference type="OrthoDB" id="7831889at2759"/>
<dbReference type="PhylomeDB" id="P61874"/>
<dbReference type="ChiTaRS" id="MtnA">
    <property type="organism name" value="fly"/>
</dbReference>
<dbReference type="Proteomes" id="UP000000304">
    <property type="component" value="Chromosome 3R"/>
</dbReference>
<dbReference type="Bgee" id="FBgn0012845">
    <property type="expression patterns" value="Expressed in adult organism and 3 other cell types or tissues"/>
</dbReference>
<dbReference type="GO" id="GO:0046872">
    <property type="term" value="F:metal ion binding"/>
    <property type="evidence" value="ECO:0007669"/>
    <property type="project" value="UniProtKB-KW"/>
</dbReference>
<dbReference type="GO" id="GO:0140961">
    <property type="term" value="P:cellular detoxification of metal ion"/>
    <property type="evidence" value="ECO:0007669"/>
    <property type="project" value="EnsemblMetazoa"/>
</dbReference>
<dbReference type="GO" id="GO:0010038">
    <property type="term" value="P:response to metal ion"/>
    <property type="evidence" value="ECO:0007669"/>
    <property type="project" value="EnsemblMetazoa"/>
</dbReference>
<dbReference type="InterPro" id="IPR000966">
    <property type="entry name" value="Metalthion_5"/>
</dbReference>
<dbReference type="Pfam" id="PF02067">
    <property type="entry name" value="Metallothio_5"/>
    <property type="match status" value="1"/>
</dbReference>
<dbReference type="PRINTS" id="PR00872">
    <property type="entry name" value="MTDIPTERA"/>
</dbReference>
<sequence>MPCPCGSGCKCASQATKGSCNCGSDCKCGGDKKSACGCSK</sequence>
<proteinExistence type="evidence at transcript level"/>
<comment type="function">
    <text>This protein binds cations of several transition elements. It is thought to be involved in detoxification processes.</text>
</comment>
<comment type="developmental stage">
    <text>Late embryogenesis, larva and adult.</text>
</comment>
<comment type="induction">
    <text>Strongly induced by cadmium, copper and mercury.</text>
</comment>
<comment type="domain">
    <text>All cysteine residues are arranged in C-X-C groups. These are thought to be the metal-binding sites in other metallothioneins.</text>
</comment>
<comment type="similarity">
    <text evidence="1">Belongs to the metallothionein superfamily. Type 5 family.</text>
</comment>
<keyword id="KW-0104">Cadmium</keyword>
<keyword id="KW-0186">Copper</keyword>
<keyword id="KW-0479">Metal-binding</keyword>
<keyword id="KW-1185">Reference proteome</keyword>
<keyword id="KW-0862">Zinc</keyword>
<name>MT1_DROSI</name>
<organism>
    <name type="scientific">Drosophila simulans</name>
    <name type="common">Fruit fly</name>
    <dbReference type="NCBI Taxonomy" id="7240"/>
    <lineage>
        <taxon>Eukaryota</taxon>
        <taxon>Metazoa</taxon>
        <taxon>Ecdysozoa</taxon>
        <taxon>Arthropoda</taxon>
        <taxon>Hexapoda</taxon>
        <taxon>Insecta</taxon>
        <taxon>Pterygota</taxon>
        <taxon>Neoptera</taxon>
        <taxon>Endopterygota</taxon>
        <taxon>Diptera</taxon>
        <taxon>Brachycera</taxon>
        <taxon>Muscomorpha</taxon>
        <taxon>Ephydroidea</taxon>
        <taxon>Drosophilidae</taxon>
        <taxon>Drosophila</taxon>
        <taxon>Sophophora</taxon>
    </lineage>
</organism>
<evidence type="ECO:0000305" key="1"/>
<accession>P61874</accession>
<accession>B4QVX8</accession>
<accession>P22254</accession>
<reference key="1">
    <citation type="journal article" date="1990" name="Genetics">
        <title>Molecular evolution of Drosophila metallothionein genes.</title>
        <authorList>
            <person name="Lange B.W."/>
            <person name="Langley C.H."/>
            <person name="Stephan W.H."/>
        </authorList>
    </citation>
    <scope>NUCLEOTIDE SEQUENCE</scope>
</reference>
<reference key="2">
    <citation type="journal article" date="1991" name="Genet. Res.">
        <title>Recent evolutionary history of the metallothionein gene Mtn in Drosophila.</title>
        <authorList>
            <person name="Theodore L."/>
            <person name="Ho A.-S."/>
            <person name="Maroni G."/>
        </authorList>
    </citation>
    <scope>NUCLEOTIDE SEQUENCE</scope>
</reference>
<reference key="3">
    <citation type="journal article" date="2007" name="Nature">
        <title>Evolution of genes and genomes on the Drosophila phylogeny.</title>
        <authorList>
            <consortium name="Drosophila 12 genomes consortium"/>
        </authorList>
    </citation>
    <scope>NUCLEOTIDE SEQUENCE [LARGE SCALE GENOMIC DNA]</scope>
</reference>
<protein>
    <recommendedName>
        <fullName>Metallothionein-1</fullName>
        <shortName>MT-1</shortName>
    </recommendedName>
</protein>
<feature type="chain" id="PRO_0000197354" description="Metallothionein-1">
    <location>
        <begin position="1"/>
        <end position="40"/>
    </location>
</feature>
<gene>
    <name type="primary">MtnA</name>
    <name type="ORF">GD20757</name>
</gene>